<reference key="1">
    <citation type="journal article" date="2004" name="Nucleic Acids Res.">
        <title>Unique features revealed by the genome sequence of Acinetobacter sp. ADP1, a versatile and naturally transformation competent bacterium.</title>
        <authorList>
            <person name="Barbe V."/>
            <person name="Vallenet D."/>
            <person name="Fonknechten N."/>
            <person name="Kreimeyer A."/>
            <person name="Oztas S."/>
            <person name="Labarre L."/>
            <person name="Cruveiller S."/>
            <person name="Robert C."/>
            <person name="Duprat S."/>
            <person name="Wincker P."/>
            <person name="Ornston L.N."/>
            <person name="Weissenbach J."/>
            <person name="Marliere P."/>
            <person name="Cohen G.N."/>
            <person name="Medigue C."/>
        </authorList>
    </citation>
    <scope>NUCLEOTIDE SEQUENCE [LARGE SCALE GENOMIC DNA]</scope>
    <source>
        <strain>ATCC 33305 / BD413 / ADP1</strain>
    </source>
</reference>
<keyword id="KW-0378">Hydrolase</keyword>
<accession>Q6FFZ9</accession>
<feature type="chain" id="PRO_0000402923" description="Putative carbamate hydrolase RutD">
    <location>
        <begin position="1"/>
        <end position="266"/>
    </location>
</feature>
<organism>
    <name type="scientific">Acinetobacter baylyi (strain ATCC 33305 / BD413 / ADP1)</name>
    <dbReference type="NCBI Taxonomy" id="62977"/>
    <lineage>
        <taxon>Bacteria</taxon>
        <taxon>Pseudomonadati</taxon>
        <taxon>Pseudomonadota</taxon>
        <taxon>Gammaproteobacteria</taxon>
        <taxon>Moraxellales</taxon>
        <taxon>Moraxellaceae</taxon>
        <taxon>Acinetobacter</taxon>
    </lineage>
</organism>
<protein>
    <recommendedName>
        <fullName evidence="1">Putative carbamate hydrolase RutD</fullName>
        <ecNumber evidence="1">3.5.1.-</ecNumber>
    </recommendedName>
    <alternativeName>
        <fullName evidence="1">Aminohydrolase</fullName>
    </alternativeName>
</protein>
<gene>
    <name evidence="1" type="primary">rutD</name>
    <name type="ordered locus">ACIAD0025</name>
</gene>
<proteinExistence type="inferred from homology"/>
<evidence type="ECO:0000255" key="1">
    <source>
        <dbReference type="HAMAP-Rule" id="MF_00832"/>
    </source>
</evidence>
<comment type="function">
    <text evidence="1">Involved in pyrimidine catabolism. May facilitate the hydrolysis of carbamate, a reaction that can also occur spontaneously.</text>
</comment>
<comment type="catalytic activity">
    <reaction evidence="1">
        <text>carbamate + 2 H(+) = NH4(+) + CO2</text>
        <dbReference type="Rhea" id="RHEA:15649"/>
        <dbReference type="ChEBI" id="CHEBI:13941"/>
        <dbReference type="ChEBI" id="CHEBI:15378"/>
        <dbReference type="ChEBI" id="CHEBI:16526"/>
        <dbReference type="ChEBI" id="CHEBI:28938"/>
    </reaction>
</comment>
<comment type="similarity">
    <text evidence="1">Belongs to the AB hydrolase superfamily. Hydrolase RutD family.</text>
</comment>
<name>RUTD_ACIAD</name>
<sequence length="266" mass="30161">MNYQLFKHSDENASYVVFSSGLGGHGSFWQAQLDVFRQYFHVLIYDQEGCHASSELLADGYSFEHLALQVKQLLQQLNIVRFHFIGHALGGFIGIELAHRYASETCQLLSLTLINAWQQLDPHTLRCFTTRIALLQHAGTAAYLHAQALFLYPPLWISEHTALLEQQEAKMQSDFPPHANVLKRLNALMQYQVNTARIDTLKQLPVCLIANQDDMLVPYVQSLNLWKKLPDAQLKLLPYGGHASTVTEARQVNQLMLDFLKTSAPT</sequence>
<dbReference type="EC" id="3.5.1.-" evidence="1"/>
<dbReference type="EMBL" id="CR543861">
    <property type="protein sequence ID" value="CAG67008.1"/>
    <property type="molecule type" value="Genomic_DNA"/>
</dbReference>
<dbReference type="RefSeq" id="WP_004930959.1">
    <property type="nucleotide sequence ID" value="NC_005966.1"/>
</dbReference>
<dbReference type="SMR" id="Q6FFZ9"/>
<dbReference type="STRING" id="202950.GCA_001485005_01773"/>
<dbReference type="ESTHER" id="aciad-q6ffz9">
    <property type="family name" value="RutD"/>
</dbReference>
<dbReference type="GeneID" id="45232559"/>
<dbReference type="KEGG" id="aci:ACIAD0025"/>
<dbReference type="eggNOG" id="COG0596">
    <property type="taxonomic scope" value="Bacteria"/>
</dbReference>
<dbReference type="HOGENOM" id="CLU_020336_50_1_6"/>
<dbReference type="OrthoDB" id="9804723at2"/>
<dbReference type="BioCyc" id="ASP62977:ACIAD_RS00135-MONOMER"/>
<dbReference type="Proteomes" id="UP000000430">
    <property type="component" value="Chromosome"/>
</dbReference>
<dbReference type="GO" id="GO:0016811">
    <property type="term" value="F:hydrolase activity, acting on carbon-nitrogen (but not peptide) bonds, in linear amides"/>
    <property type="evidence" value="ECO:0007669"/>
    <property type="project" value="InterPro"/>
</dbReference>
<dbReference type="GO" id="GO:0019740">
    <property type="term" value="P:nitrogen utilization"/>
    <property type="evidence" value="ECO:0007669"/>
    <property type="project" value="UniProtKB-UniRule"/>
</dbReference>
<dbReference type="GO" id="GO:0006212">
    <property type="term" value="P:uracil catabolic process"/>
    <property type="evidence" value="ECO:0007669"/>
    <property type="project" value="UniProtKB-UniRule"/>
</dbReference>
<dbReference type="Gene3D" id="3.40.50.1820">
    <property type="entry name" value="alpha/beta hydrolase"/>
    <property type="match status" value="1"/>
</dbReference>
<dbReference type="HAMAP" id="MF_00832">
    <property type="entry name" value="RutD"/>
    <property type="match status" value="1"/>
</dbReference>
<dbReference type="InterPro" id="IPR050471">
    <property type="entry name" value="AB_hydrolase"/>
</dbReference>
<dbReference type="InterPro" id="IPR000073">
    <property type="entry name" value="AB_hydrolase_1"/>
</dbReference>
<dbReference type="InterPro" id="IPR029058">
    <property type="entry name" value="AB_hydrolase_fold"/>
</dbReference>
<dbReference type="InterPro" id="IPR019913">
    <property type="entry name" value="Pyrimidine_utilisation_RutD"/>
</dbReference>
<dbReference type="NCBIfam" id="TIGR03611">
    <property type="entry name" value="RutD"/>
    <property type="match status" value="1"/>
</dbReference>
<dbReference type="PANTHER" id="PTHR43433:SF10">
    <property type="entry name" value="AB HYDROLASE-1 DOMAIN-CONTAINING PROTEIN"/>
    <property type="match status" value="1"/>
</dbReference>
<dbReference type="PANTHER" id="PTHR43433">
    <property type="entry name" value="HYDROLASE, ALPHA/BETA FOLD FAMILY PROTEIN"/>
    <property type="match status" value="1"/>
</dbReference>
<dbReference type="Pfam" id="PF00561">
    <property type="entry name" value="Abhydrolase_1"/>
    <property type="match status" value="1"/>
</dbReference>
<dbReference type="SUPFAM" id="SSF53474">
    <property type="entry name" value="alpha/beta-Hydrolases"/>
    <property type="match status" value="1"/>
</dbReference>